<evidence type="ECO:0000255" key="1">
    <source>
        <dbReference type="HAMAP-Rule" id="MF_00120"/>
    </source>
</evidence>
<accession>Q9HR43</accession>
<comment type="function">
    <text evidence="1">Allows the formation of correctly charged Gln-tRNA(Gln) through the transamidation of misacylated Glu-tRNA(Gln) in organisms which lack glutaminyl-tRNA synthetase. The reaction takes place in the presence of glutamine and ATP through an activated gamma-phospho-Glu-tRNA(Gln).</text>
</comment>
<comment type="catalytic activity">
    <reaction evidence="1">
        <text>L-glutamyl-tRNA(Gln) + L-glutamine + ATP + H2O = L-glutaminyl-tRNA(Gln) + L-glutamate + ADP + phosphate + H(+)</text>
        <dbReference type="Rhea" id="RHEA:17521"/>
        <dbReference type="Rhea" id="RHEA-COMP:9681"/>
        <dbReference type="Rhea" id="RHEA-COMP:9684"/>
        <dbReference type="ChEBI" id="CHEBI:15377"/>
        <dbReference type="ChEBI" id="CHEBI:15378"/>
        <dbReference type="ChEBI" id="CHEBI:29985"/>
        <dbReference type="ChEBI" id="CHEBI:30616"/>
        <dbReference type="ChEBI" id="CHEBI:43474"/>
        <dbReference type="ChEBI" id="CHEBI:58359"/>
        <dbReference type="ChEBI" id="CHEBI:78520"/>
        <dbReference type="ChEBI" id="CHEBI:78521"/>
        <dbReference type="ChEBI" id="CHEBI:456216"/>
        <dbReference type="EC" id="6.3.5.7"/>
    </reaction>
</comment>
<comment type="subunit">
    <text evidence="1">Heterotrimer of A, B and C subunits.</text>
</comment>
<comment type="similarity">
    <text evidence="1">Belongs to the amidase family. GatA subfamily.</text>
</comment>
<dbReference type="EC" id="6.3.5.7" evidence="1"/>
<dbReference type="EMBL" id="AE004437">
    <property type="protein sequence ID" value="AAG19315.1"/>
    <property type="molecule type" value="Genomic_DNA"/>
</dbReference>
<dbReference type="PIR" id="G84243">
    <property type="entry name" value="G84243"/>
</dbReference>
<dbReference type="RefSeq" id="WP_010902611.1">
    <property type="nucleotide sequence ID" value="NC_002607.1"/>
</dbReference>
<dbReference type="SMR" id="Q9HR43"/>
<dbReference type="FunCoup" id="Q9HR43">
    <property type="interactions" value="108"/>
</dbReference>
<dbReference type="STRING" id="64091.VNG_0872G"/>
<dbReference type="PaxDb" id="64091-VNG_0872G"/>
<dbReference type="GeneID" id="68693698"/>
<dbReference type="KEGG" id="hal:VNG_0872G"/>
<dbReference type="PATRIC" id="fig|64091.14.peg.668"/>
<dbReference type="HOGENOM" id="CLU_009600_0_3_2"/>
<dbReference type="InParanoid" id="Q9HR43"/>
<dbReference type="OrthoDB" id="7931at2157"/>
<dbReference type="PhylomeDB" id="Q9HR43"/>
<dbReference type="Proteomes" id="UP000000554">
    <property type="component" value="Chromosome"/>
</dbReference>
<dbReference type="GO" id="GO:0030956">
    <property type="term" value="C:glutamyl-tRNA(Gln) amidotransferase complex"/>
    <property type="evidence" value="ECO:0007669"/>
    <property type="project" value="InterPro"/>
</dbReference>
<dbReference type="GO" id="GO:0005524">
    <property type="term" value="F:ATP binding"/>
    <property type="evidence" value="ECO:0007669"/>
    <property type="project" value="UniProtKB-KW"/>
</dbReference>
<dbReference type="GO" id="GO:0050567">
    <property type="term" value="F:glutaminyl-tRNA synthase (glutamine-hydrolyzing) activity"/>
    <property type="evidence" value="ECO:0007669"/>
    <property type="project" value="UniProtKB-UniRule"/>
</dbReference>
<dbReference type="GO" id="GO:0006412">
    <property type="term" value="P:translation"/>
    <property type="evidence" value="ECO:0007669"/>
    <property type="project" value="UniProtKB-UniRule"/>
</dbReference>
<dbReference type="Gene3D" id="3.90.1300.10">
    <property type="entry name" value="Amidase signature (AS) domain"/>
    <property type="match status" value="1"/>
</dbReference>
<dbReference type="HAMAP" id="MF_00120">
    <property type="entry name" value="GatA"/>
    <property type="match status" value="1"/>
</dbReference>
<dbReference type="InterPro" id="IPR000120">
    <property type="entry name" value="Amidase"/>
</dbReference>
<dbReference type="InterPro" id="IPR020556">
    <property type="entry name" value="Amidase_CS"/>
</dbReference>
<dbReference type="InterPro" id="IPR023631">
    <property type="entry name" value="Amidase_dom"/>
</dbReference>
<dbReference type="InterPro" id="IPR036928">
    <property type="entry name" value="AS_sf"/>
</dbReference>
<dbReference type="InterPro" id="IPR004412">
    <property type="entry name" value="GatA"/>
</dbReference>
<dbReference type="NCBIfam" id="TIGR00132">
    <property type="entry name" value="gatA"/>
    <property type="match status" value="1"/>
</dbReference>
<dbReference type="PANTHER" id="PTHR11895:SF7">
    <property type="entry name" value="GLUTAMYL-TRNA(GLN) AMIDOTRANSFERASE SUBUNIT A, MITOCHONDRIAL"/>
    <property type="match status" value="1"/>
</dbReference>
<dbReference type="PANTHER" id="PTHR11895">
    <property type="entry name" value="TRANSAMIDASE"/>
    <property type="match status" value="1"/>
</dbReference>
<dbReference type="Pfam" id="PF01425">
    <property type="entry name" value="Amidase"/>
    <property type="match status" value="1"/>
</dbReference>
<dbReference type="SUPFAM" id="SSF75304">
    <property type="entry name" value="Amidase signature (AS) enzymes"/>
    <property type="match status" value="1"/>
</dbReference>
<dbReference type="PROSITE" id="PS00571">
    <property type="entry name" value="AMIDASES"/>
    <property type="match status" value="1"/>
</dbReference>
<gene>
    <name evidence="1" type="primary">gatA</name>
    <name type="ordered locus">VNG_0872G</name>
</gene>
<feature type="chain" id="PRO_0000105231" description="Glutamyl-tRNA(Gln) amidotransferase subunit A">
    <location>
        <begin position="1"/>
        <end position="423"/>
    </location>
</feature>
<feature type="active site" description="Charge relay system" evidence="1">
    <location>
        <position position="28"/>
    </location>
</feature>
<feature type="active site" description="Charge relay system" evidence="1">
    <location>
        <position position="103"/>
    </location>
</feature>
<feature type="active site" description="Acyl-ester intermediate" evidence="1">
    <location>
        <position position="127"/>
    </location>
</feature>
<reference key="1">
    <citation type="journal article" date="2000" name="Proc. Natl. Acad. Sci. U.S.A.">
        <title>Genome sequence of Halobacterium species NRC-1.</title>
        <authorList>
            <person name="Ng W.V."/>
            <person name="Kennedy S.P."/>
            <person name="Mahairas G.G."/>
            <person name="Berquist B."/>
            <person name="Pan M."/>
            <person name="Shukla H.D."/>
            <person name="Lasky S.R."/>
            <person name="Baliga N.S."/>
            <person name="Thorsson V."/>
            <person name="Sbrogna J."/>
            <person name="Swartzell S."/>
            <person name="Weir D."/>
            <person name="Hall J."/>
            <person name="Dahl T.A."/>
            <person name="Welti R."/>
            <person name="Goo Y.A."/>
            <person name="Leithauser B."/>
            <person name="Keller K."/>
            <person name="Cruz R."/>
            <person name="Danson M.J."/>
            <person name="Hough D.W."/>
            <person name="Maddocks D.G."/>
            <person name="Jablonski P.E."/>
            <person name="Krebs M.P."/>
            <person name="Angevine C.M."/>
            <person name="Dale H."/>
            <person name="Isenbarger T.A."/>
            <person name="Peck R.F."/>
            <person name="Pohlschroder M."/>
            <person name="Spudich J.L."/>
            <person name="Jung K.-H."/>
            <person name="Alam M."/>
            <person name="Freitas T."/>
            <person name="Hou S."/>
            <person name="Daniels C.J."/>
            <person name="Dennis P.P."/>
            <person name="Omer A.D."/>
            <person name="Ebhardt H."/>
            <person name="Lowe T.M."/>
            <person name="Liang P."/>
            <person name="Riley M."/>
            <person name="Hood L."/>
            <person name="DasSarma S."/>
        </authorList>
    </citation>
    <scope>NUCLEOTIDE SEQUENCE [LARGE SCALE GENOMIC DNA]</scope>
    <source>
        <strain>ATCC 700922 / JCM 11081 / NRC-1</strain>
    </source>
</reference>
<name>GATA_HALSA</name>
<proteinExistence type="inferred from homology"/>
<keyword id="KW-0067">ATP-binding</keyword>
<keyword id="KW-0436">Ligase</keyword>
<keyword id="KW-0547">Nucleotide-binding</keyword>
<keyword id="KW-0648">Protein biosynthesis</keyword>
<keyword id="KW-1185">Reference proteome</keyword>
<protein>
    <recommendedName>
        <fullName evidence="1">Glutamyl-tRNA(Gln) amidotransferase subunit A</fullName>
        <shortName evidence="1">Glu-ADT subunit A</shortName>
        <ecNumber evidence="1">6.3.5.7</ecNumber>
    </recommendedName>
</protein>
<organism>
    <name type="scientific">Halobacterium salinarum (strain ATCC 700922 / JCM 11081 / NRC-1)</name>
    <name type="common">Halobacterium halobium</name>
    <dbReference type="NCBI Taxonomy" id="64091"/>
    <lineage>
        <taxon>Archaea</taxon>
        <taxon>Methanobacteriati</taxon>
        <taxon>Methanobacteriota</taxon>
        <taxon>Stenosarchaea group</taxon>
        <taxon>Halobacteria</taxon>
        <taxon>Halobacteriales</taxon>
        <taxon>Halobacteriaceae</taxon>
        <taxon>Halobacterium</taxon>
        <taxon>Halobacterium salinarum NRC-34001</taxon>
    </lineage>
</organism>
<sequence>MSLNAFITETTIQGAADGPLDGTTVAVKDNISTKGVPTTCGSKMLADYEPPYNATVVEDLLAAGGTIVGKTNMDEFGMGTTTETSYFGPTKNPVDETRVPGGSSGGSAAAVANGDADLALGSDTGGSVRAPAAYCGVVGLKPTYGLVSRYGLVAYANSLEQIGPIAPTVEGAAELLDVIAGPDEHDGTTRDAGADADYASAATGDVDGLTIGVPQELTDGADDRVVERFEAALADLRAEGATTVDVALPSCEYAVAAYYVIAMSEASSNLARFDGVRYGTGGGFDGNWNETFADARADGFGDEVTRRILLGTYALSAGYHDKYYKQAQEARAWVKQDFDETFADVDVVASPTMPVLPPKLGESLDDPVQMYLADANTTPANLANLPAISVPAGDADGLPVGVQLVGPKFGEETIINAAAAVEQ</sequence>